<feature type="chain" id="PRO_0000377274" description="tRNA dimethylallyltransferase">
    <location>
        <begin position="1"/>
        <end position="414"/>
    </location>
</feature>
<feature type="region of interest" description="Interaction with substrate tRNA" evidence="1">
    <location>
        <begin position="58"/>
        <end position="61"/>
    </location>
</feature>
<feature type="region of interest" description="Interaction with substrate tRNA" evidence="1">
    <location>
        <begin position="182"/>
        <end position="186"/>
    </location>
</feature>
<feature type="region of interest" description="Interaction with substrate tRNA" evidence="1">
    <location>
        <begin position="266"/>
        <end position="271"/>
    </location>
</feature>
<feature type="binding site" evidence="1">
    <location>
        <begin position="33"/>
        <end position="40"/>
    </location>
    <ligand>
        <name>ATP</name>
        <dbReference type="ChEBI" id="CHEBI:30616"/>
    </ligand>
</feature>
<feature type="binding site" evidence="1">
    <location>
        <begin position="35"/>
        <end position="40"/>
    </location>
    <ligand>
        <name>substrate</name>
    </ligand>
</feature>
<feature type="site" description="Interaction with substrate tRNA" evidence="1">
    <location>
        <position position="124"/>
    </location>
</feature>
<feature type="site" description="Interaction with substrate tRNA" evidence="1">
    <location>
        <position position="146"/>
    </location>
</feature>
<evidence type="ECO:0000255" key="1">
    <source>
        <dbReference type="HAMAP-Rule" id="MF_00185"/>
    </source>
</evidence>
<gene>
    <name evidence="1" type="primary">miaA</name>
    <name type="ordered locus">Pcryo_1494</name>
</gene>
<protein>
    <recommendedName>
        <fullName evidence="1">tRNA dimethylallyltransferase</fullName>
        <ecNumber evidence="1">2.5.1.75</ecNumber>
    </recommendedName>
    <alternativeName>
        <fullName evidence="1">Dimethylallyl diphosphate:tRNA dimethylallyltransferase</fullName>
        <shortName evidence="1">DMAPP:tRNA dimethylallyltransferase</shortName>
        <shortName evidence="1">DMATase</shortName>
    </alternativeName>
    <alternativeName>
        <fullName evidence="1">Isopentenyl-diphosphate:tRNA isopentenyltransferase</fullName>
        <shortName evidence="1">IPP transferase</shortName>
        <shortName evidence="1">IPPT</shortName>
        <shortName evidence="1">IPTase</shortName>
    </alternativeName>
</protein>
<comment type="function">
    <text evidence="1">Catalyzes the transfer of a dimethylallyl group onto the adenine at position 37 in tRNAs that read codons beginning with uridine, leading to the formation of N6-(dimethylallyl)adenosine (i(6)A).</text>
</comment>
<comment type="catalytic activity">
    <reaction evidence="1">
        <text>adenosine(37) in tRNA + dimethylallyl diphosphate = N(6)-dimethylallyladenosine(37) in tRNA + diphosphate</text>
        <dbReference type="Rhea" id="RHEA:26482"/>
        <dbReference type="Rhea" id="RHEA-COMP:10162"/>
        <dbReference type="Rhea" id="RHEA-COMP:10375"/>
        <dbReference type="ChEBI" id="CHEBI:33019"/>
        <dbReference type="ChEBI" id="CHEBI:57623"/>
        <dbReference type="ChEBI" id="CHEBI:74411"/>
        <dbReference type="ChEBI" id="CHEBI:74415"/>
        <dbReference type="EC" id="2.5.1.75"/>
    </reaction>
</comment>
<comment type="cofactor">
    <cofactor evidence="1">
        <name>Mg(2+)</name>
        <dbReference type="ChEBI" id="CHEBI:18420"/>
    </cofactor>
</comment>
<comment type="subunit">
    <text evidence="1">Monomer.</text>
</comment>
<comment type="similarity">
    <text evidence="1">Belongs to the IPP transferase family.</text>
</comment>
<proteinExistence type="inferred from homology"/>
<organism>
    <name type="scientific">Psychrobacter cryohalolentis (strain ATCC BAA-1226 / DSM 17306 / VKM B-2378 / K5)</name>
    <dbReference type="NCBI Taxonomy" id="335284"/>
    <lineage>
        <taxon>Bacteria</taxon>
        <taxon>Pseudomonadati</taxon>
        <taxon>Pseudomonadota</taxon>
        <taxon>Gammaproteobacteria</taxon>
        <taxon>Moraxellales</taxon>
        <taxon>Moraxellaceae</taxon>
        <taxon>Psychrobacter</taxon>
    </lineage>
</organism>
<name>MIAA_PSYCK</name>
<accession>Q1QAN0</accession>
<reference key="1">
    <citation type="submission" date="2006-03" db="EMBL/GenBank/DDBJ databases">
        <title>Complete sequence of chromosome of Psychrobacter cryohalolentis K5.</title>
        <authorList>
            <consortium name="US DOE Joint Genome Institute"/>
            <person name="Copeland A."/>
            <person name="Lucas S."/>
            <person name="Lapidus A."/>
            <person name="Barry K."/>
            <person name="Detter J.C."/>
            <person name="Glavina T."/>
            <person name="Hammon N."/>
            <person name="Israni S."/>
            <person name="Dalin E."/>
            <person name="Tice H."/>
            <person name="Pitluck S."/>
            <person name="Brettin T."/>
            <person name="Bruce D."/>
            <person name="Han C."/>
            <person name="Tapia R."/>
            <person name="Sims D.R."/>
            <person name="Gilna P."/>
            <person name="Schmutz J."/>
            <person name="Larimer F."/>
            <person name="Land M."/>
            <person name="Hauser L."/>
            <person name="Kyrpides N."/>
            <person name="Kim E."/>
            <person name="Richardson P."/>
        </authorList>
    </citation>
    <scope>NUCLEOTIDE SEQUENCE [LARGE SCALE GENOMIC DNA]</scope>
    <source>
        <strain>ATCC BAA-1226 / DSM 17306 / VKM B-2378 / K5</strain>
    </source>
</reference>
<keyword id="KW-0067">ATP-binding</keyword>
<keyword id="KW-0460">Magnesium</keyword>
<keyword id="KW-0547">Nucleotide-binding</keyword>
<keyword id="KW-0808">Transferase</keyword>
<keyword id="KW-0819">tRNA processing</keyword>
<dbReference type="EC" id="2.5.1.75" evidence="1"/>
<dbReference type="EMBL" id="CP000323">
    <property type="protein sequence ID" value="ABE75273.1"/>
    <property type="molecule type" value="Genomic_DNA"/>
</dbReference>
<dbReference type="SMR" id="Q1QAN0"/>
<dbReference type="STRING" id="335284.Pcryo_1494"/>
<dbReference type="KEGG" id="pcr:Pcryo_1494"/>
<dbReference type="eggNOG" id="COG0324">
    <property type="taxonomic scope" value="Bacteria"/>
</dbReference>
<dbReference type="HOGENOM" id="CLU_032616_1_0_6"/>
<dbReference type="Proteomes" id="UP000002425">
    <property type="component" value="Chromosome"/>
</dbReference>
<dbReference type="GO" id="GO:0005524">
    <property type="term" value="F:ATP binding"/>
    <property type="evidence" value="ECO:0007669"/>
    <property type="project" value="UniProtKB-UniRule"/>
</dbReference>
<dbReference type="GO" id="GO:0052381">
    <property type="term" value="F:tRNA dimethylallyltransferase activity"/>
    <property type="evidence" value="ECO:0007669"/>
    <property type="project" value="UniProtKB-UniRule"/>
</dbReference>
<dbReference type="GO" id="GO:0006400">
    <property type="term" value="P:tRNA modification"/>
    <property type="evidence" value="ECO:0007669"/>
    <property type="project" value="TreeGrafter"/>
</dbReference>
<dbReference type="Gene3D" id="1.10.20.140">
    <property type="match status" value="1"/>
</dbReference>
<dbReference type="Gene3D" id="3.40.50.300">
    <property type="entry name" value="P-loop containing nucleotide triphosphate hydrolases"/>
    <property type="match status" value="1"/>
</dbReference>
<dbReference type="HAMAP" id="MF_00185">
    <property type="entry name" value="IPP_trans"/>
    <property type="match status" value="1"/>
</dbReference>
<dbReference type="InterPro" id="IPR039657">
    <property type="entry name" value="Dimethylallyltransferase"/>
</dbReference>
<dbReference type="InterPro" id="IPR018022">
    <property type="entry name" value="IPT"/>
</dbReference>
<dbReference type="InterPro" id="IPR027417">
    <property type="entry name" value="P-loop_NTPase"/>
</dbReference>
<dbReference type="NCBIfam" id="TIGR00174">
    <property type="entry name" value="miaA"/>
    <property type="match status" value="1"/>
</dbReference>
<dbReference type="PANTHER" id="PTHR11088">
    <property type="entry name" value="TRNA DIMETHYLALLYLTRANSFERASE"/>
    <property type="match status" value="1"/>
</dbReference>
<dbReference type="PANTHER" id="PTHR11088:SF60">
    <property type="entry name" value="TRNA DIMETHYLALLYLTRANSFERASE"/>
    <property type="match status" value="1"/>
</dbReference>
<dbReference type="Pfam" id="PF01715">
    <property type="entry name" value="IPPT"/>
    <property type="match status" value="1"/>
</dbReference>
<dbReference type="SUPFAM" id="SSF52540">
    <property type="entry name" value="P-loop containing nucleoside triphosphate hydrolases"/>
    <property type="match status" value="1"/>
</dbReference>
<sequence length="414" mass="46624">MTIKGKYMRLSSDSLSSYLSPNLADNSVVCLMAPTASGKTALAYELYNSGRYELISVDSALVYRDMTVGTAKPNAAELARYPHHLVDIIDPMQSYSVAEFVNDVARLIDSCHQNGKIPLLVGGTMMYYMALLDGLSPVPDSDDSVRARVEQWRQDEGISALYDYLGKVDAISHERLNATDTQRITRAVEVYLQTDIPISDWQRQPKQALAYNPNQQWHALAVMPDRPWLHTRIEQRLDIMWREGLVAEVISLLEHYPLTPGLPSMRCVGYRQVLEYLVQTNHPVFEQPHLDKAQFYDAFAQSEPSSNESKEQDTTIQSSITQTHLPMATAQTEALACQQMQNKALYATRQLAKRQYTWLRKVMQLSNTAAVPTTESITASSTSTVGSDDVTDFQKNKLILHSFSTMEQARAYLV</sequence>